<reference key="1">
    <citation type="journal article" date="2002" name="Proc. Natl. Acad. Sci. U.S.A.">
        <title>Extensive mosaic structure revealed by the complete genome sequence of uropathogenic Escherichia coli.</title>
        <authorList>
            <person name="Welch R.A."/>
            <person name="Burland V."/>
            <person name="Plunkett G. III"/>
            <person name="Redford P."/>
            <person name="Roesch P."/>
            <person name="Rasko D."/>
            <person name="Buckles E.L."/>
            <person name="Liou S.-R."/>
            <person name="Boutin A."/>
            <person name="Hackett J."/>
            <person name="Stroud D."/>
            <person name="Mayhew G.F."/>
            <person name="Rose D.J."/>
            <person name="Zhou S."/>
            <person name="Schwartz D.C."/>
            <person name="Perna N.T."/>
            <person name="Mobley H.L.T."/>
            <person name="Donnenberg M.S."/>
            <person name="Blattner F.R."/>
        </authorList>
    </citation>
    <scope>NUCLEOTIDE SEQUENCE [LARGE SCALE GENOMIC DNA]</scope>
    <source>
        <strain>CFT073 / ATCC 700928 / UPEC</strain>
    </source>
</reference>
<reference key="2">
    <citation type="journal article" date="2012" name="PLoS Pathog.">
        <title>Toxin-antitoxin systems are important for niche-specific colonization and stress resistance of uropathogenic Escherichia coli.</title>
        <authorList>
            <person name="Norton J.P."/>
            <person name="Mulvey M.A."/>
        </authorList>
    </citation>
    <scope>DISRUPTION PHENOTYPE</scope>
    <source>
        <strain>CFT073 / ATCC 700928 / UPEC</strain>
    </source>
</reference>
<keyword id="KW-0255">Endonuclease</keyword>
<keyword id="KW-0378">Hydrolase</keyword>
<keyword id="KW-0540">Nuclease</keyword>
<keyword id="KW-1185">Reference proteome</keyword>
<keyword id="KW-0678">Repressor</keyword>
<keyword id="KW-1277">Toxin-antitoxin system</keyword>
<keyword id="KW-0804">Transcription</keyword>
<keyword id="KW-0805">Transcription regulation</keyword>
<protein>
    <recommendedName>
        <fullName>Toxin YhaV</fullName>
        <ecNumber>3.1.-.-</ecNumber>
    </recommendedName>
    <alternativeName>
        <fullName>Ribonuclease YhaV</fullName>
    </alternativeName>
</protein>
<accession>Q8FDB4</accession>
<name>YHAV_ECOL6</name>
<dbReference type="EC" id="3.1.-.-"/>
<dbReference type="EMBL" id="AE014075">
    <property type="protein sequence ID" value="AAN82326.1"/>
    <property type="molecule type" value="Genomic_DNA"/>
</dbReference>
<dbReference type="RefSeq" id="WP_000347252.1">
    <property type="nucleotide sequence ID" value="NZ_CP051263.1"/>
</dbReference>
<dbReference type="SMR" id="Q8FDB4"/>
<dbReference type="STRING" id="199310.c3885"/>
<dbReference type="KEGG" id="ecc:c3885"/>
<dbReference type="eggNOG" id="ENOG502ZB6Z">
    <property type="taxonomic scope" value="Bacteria"/>
</dbReference>
<dbReference type="HOGENOM" id="CLU_137758_0_0_6"/>
<dbReference type="BioCyc" id="ECOL199310:C3885-MONOMER"/>
<dbReference type="Proteomes" id="UP000001410">
    <property type="component" value="Chromosome"/>
</dbReference>
<dbReference type="GO" id="GO:0110001">
    <property type="term" value="C:toxin-antitoxin complex"/>
    <property type="evidence" value="ECO:0007669"/>
    <property type="project" value="InterPro"/>
</dbReference>
<dbReference type="GO" id="GO:0004519">
    <property type="term" value="F:endonuclease activity"/>
    <property type="evidence" value="ECO:0007669"/>
    <property type="project" value="UniProtKB-KW"/>
</dbReference>
<dbReference type="GO" id="GO:0004540">
    <property type="term" value="F:RNA nuclease activity"/>
    <property type="evidence" value="ECO:0007669"/>
    <property type="project" value="InterPro"/>
</dbReference>
<dbReference type="InterPro" id="IPR021679">
    <property type="entry name" value="Toxin_endonuclease_YhaV"/>
</dbReference>
<dbReference type="Pfam" id="PF11663">
    <property type="entry name" value="Toxin_YhaV"/>
    <property type="match status" value="1"/>
</dbReference>
<comment type="function">
    <text evidence="1">Toxic component of a type II toxin-antitoxin (TA) system. Has RNase activity in vitro. Acts as a transcription factor. The YhaV/PrlF complex binds the prlF-yhaV operon, probably negatively regulating its expression (By similarity).</text>
</comment>
<comment type="subunit">
    <text evidence="1">Homohexamer; forms a complex with PrlF (SohA) with stoichiometry PrlF(2)-YhaV(4), possibly as a YhaV(2)-PrlF(2)-YhaV(2) complex like the MazFE complex. May dimerize in solution (By similarity).</text>
</comment>
<comment type="disruption phenotype">
    <text evidence="2">Deletion of the prlF-yhaV operon has no effect on virulence in mouse infection; the disrupted strain is as virulent as wild-type.</text>
</comment>
<evidence type="ECO:0000250" key="1"/>
<evidence type="ECO:0000269" key="2">
    <source>
    </source>
</evidence>
<organism>
    <name type="scientific">Escherichia coli O6:H1 (strain CFT073 / ATCC 700928 / UPEC)</name>
    <dbReference type="NCBI Taxonomy" id="199310"/>
    <lineage>
        <taxon>Bacteria</taxon>
        <taxon>Pseudomonadati</taxon>
        <taxon>Pseudomonadota</taxon>
        <taxon>Gammaproteobacteria</taxon>
        <taxon>Enterobacterales</taxon>
        <taxon>Enterobacteriaceae</taxon>
        <taxon>Escherichia</taxon>
    </lineage>
</organism>
<feature type="chain" id="PRO_0000420799" description="Toxin YhaV">
    <location>
        <begin position="1"/>
        <end position="154"/>
    </location>
</feature>
<proteinExistence type="inferred from homology"/>
<gene>
    <name type="primary">yhaV</name>
    <name type="ordered locus">c3885</name>
</gene>
<sequence length="154" mass="17750">MDFPQRVNGWALYAHPCFQETYDALVAEVEALKGKDPENYQRKAATKLLAVVHKVIEEHITVNPSSPAFRHGKSLGSGKNKDWSRVKFGAGRYRLFFRYSEKEKVIILGWMNDENTLRTYGKKTDAYTVFSKMLKRGHPPADWESLTQETEESH</sequence>